<protein>
    <recommendedName>
        <fullName>Cytochrome c oxidase subunit 2</fullName>
        <ecNumber>7.1.1.9</ecNumber>
    </recommendedName>
    <alternativeName>
        <fullName>Cytochrome c oxidase polypeptide II</fullName>
    </alternativeName>
</protein>
<gene>
    <name type="primary">MT-CO2</name>
    <name type="synonym">COII</name>
    <name type="synonym">COX2</name>
    <name type="synonym">COXII</name>
    <name type="synonym">MTCO2</name>
</gene>
<geneLocation type="mitochondrion"/>
<accession>P67780</accession>
<accession>O48362</accession>
<accession>O63855</accession>
<feature type="chain" id="PRO_0000183532" description="Cytochrome c oxidase subunit 2">
    <location>
        <begin position="1"/>
        <end position="227"/>
    </location>
</feature>
<feature type="topological domain" description="Mitochondrial intermembrane" evidence="4">
    <location>
        <begin position="1"/>
        <end position="14"/>
    </location>
</feature>
<feature type="transmembrane region" description="Helical; Name=I" evidence="4">
    <location>
        <begin position="15"/>
        <end position="45"/>
    </location>
</feature>
<feature type="topological domain" description="Mitochondrial matrix" evidence="4">
    <location>
        <begin position="46"/>
        <end position="59"/>
    </location>
</feature>
<feature type="transmembrane region" description="Helical; Name=II" evidence="4">
    <location>
        <begin position="60"/>
        <end position="87"/>
    </location>
</feature>
<feature type="topological domain" description="Mitochondrial intermembrane" evidence="4">
    <location>
        <begin position="88"/>
        <end position="227"/>
    </location>
</feature>
<feature type="binding site" evidence="4">
    <location>
        <position position="161"/>
    </location>
    <ligand>
        <name>Cu cation</name>
        <dbReference type="ChEBI" id="CHEBI:23378"/>
        <label>A1</label>
    </ligand>
</feature>
<feature type="binding site" evidence="4">
    <location>
        <position position="196"/>
    </location>
    <ligand>
        <name>Cu cation</name>
        <dbReference type="ChEBI" id="CHEBI:23378"/>
        <label>A1</label>
    </ligand>
</feature>
<feature type="binding site" evidence="4">
    <location>
        <position position="196"/>
    </location>
    <ligand>
        <name>Cu cation</name>
        <dbReference type="ChEBI" id="CHEBI:23378"/>
        <label>A2</label>
    </ligand>
</feature>
<feature type="binding site" evidence="4">
    <location>
        <position position="198"/>
    </location>
    <ligand>
        <name>Cu cation</name>
        <dbReference type="ChEBI" id="CHEBI:23378"/>
        <label>A2</label>
    </ligand>
</feature>
<feature type="binding site" evidence="4">
    <location>
        <position position="198"/>
    </location>
    <ligand>
        <name>Mg(2+)</name>
        <dbReference type="ChEBI" id="CHEBI:18420"/>
        <note>ligand shared with MT-CO1</note>
    </ligand>
</feature>
<feature type="binding site" evidence="4">
    <location>
        <position position="200"/>
    </location>
    <ligand>
        <name>Cu cation</name>
        <dbReference type="ChEBI" id="CHEBI:23378"/>
        <label>A1</label>
    </ligand>
</feature>
<feature type="binding site" evidence="4">
    <location>
        <position position="200"/>
    </location>
    <ligand>
        <name>Cu cation</name>
        <dbReference type="ChEBI" id="CHEBI:23378"/>
        <label>A2</label>
    </ligand>
</feature>
<feature type="binding site" evidence="4">
    <location>
        <position position="204"/>
    </location>
    <ligand>
        <name>Cu cation</name>
        <dbReference type="ChEBI" id="CHEBI:23378"/>
        <label>A2</label>
    </ligand>
</feature>
<feature type="binding site" evidence="4">
    <location>
        <position position="207"/>
    </location>
    <ligand>
        <name>Cu cation</name>
        <dbReference type="ChEBI" id="CHEBI:23378"/>
        <label>A1</label>
    </ligand>
</feature>
<feature type="modified residue" description="Phosphotyrosine" evidence="2">
    <location>
        <position position="218"/>
    </location>
</feature>
<evidence type="ECO:0000250" key="1">
    <source>
        <dbReference type="UniProtKB" id="P00403"/>
    </source>
</evidence>
<evidence type="ECO:0000250" key="2">
    <source>
        <dbReference type="UniProtKB" id="P00406"/>
    </source>
</evidence>
<evidence type="ECO:0000250" key="3">
    <source>
        <dbReference type="UniProtKB" id="P00410"/>
    </source>
</evidence>
<evidence type="ECO:0000250" key="4">
    <source>
        <dbReference type="UniProtKB" id="P68530"/>
    </source>
</evidence>
<evidence type="ECO:0000305" key="5"/>
<evidence type="ECO:0000312" key="6">
    <source>
        <dbReference type="Proteomes" id="UP000002254"/>
    </source>
</evidence>
<reference key="1">
    <citation type="journal article" date="1998" name="Mol. Phylogenet. Evol.">
        <title>The complete nucleotide sequence of the domestic dog (Canis familiaris) mitochondrial genome.</title>
        <authorList>
            <person name="Kim K.S."/>
            <person name="Lee S.E."/>
            <person name="Jeong H.W."/>
            <person name="Ha J.H."/>
        </authorList>
    </citation>
    <scope>NUCLEOTIDE SEQUENCE [GENOMIC DNA]</scope>
    <source>
        <strain evidence="6">Boxer</strain>
    </source>
</reference>
<reference key="2">
    <citation type="submission" date="2000-04" db="EMBL/GenBank/DDBJ databases">
        <authorList>
            <person name="Kim K.S."/>
            <person name="Lee S.E."/>
            <person name="Jeong H.W."/>
            <person name="Jeong S.Y."/>
            <person name="Sohn H.S."/>
            <person name="Ha J.H."/>
        </authorList>
    </citation>
    <scope>SEQUENCE REVISION</scope>
</reference>
<reference key="3">
    <citation type="submission" date="2004-08" db="EMBL/GenBank/DDBJ databases">
        <title>The complete mitochondrial DNA sequence of the Beagle dog (Canis familiaris).</title>
        <authorList>
            <person name="Zhu S."/>
            <person name="Xu Q."/>
            <person name="Chang H."/>
        </authorList>
    </citation>
    <scope>NUCLEOTIDE SEQUENCE [GENOMIC DNA]</scope>
    <source>
        <strain>Beagle</strain>
    </source>
</reference>
<reference key="4">
    <citation type="submission" date="1998-05" db="EMBL/GenBank/DDBJ databases">
        <authorList>
            <person name="Kim K.S."/>
            <person name="Jeong H.W."/>
            <person name="Ha J.H."/>
        </authorList>
    </citation>
    <scope>NUCLEOTIDE SEQUENCE [GENOMIC DNA] OF 8-144</scope>
    <source>
        <strain>Shepherd</strain>
    </source>
</reference>
<keyword id="KW-0186">Copper</keyword>
<keyword id="KW-0249">Electron transport</keyword>
<keyword id="KW-0460">Magnesium</keyword>
<keyword id="KW-0472">Membrane</keyword>
<keyword id="KW-0479">Metal-binding</keyword>
<keyword id="KW-0496">Mitochondrion</keyword>
<keyword id="KW-0999">Mitochondrion inner membrane</keyword>
<keyword id="KW-0597">Phosphoprotein</keyword>
<keyword id="KW-1185">Reference proteome</keyword>
<keyword id="KW-0679">Respiratory chain</keyword>
<keyword id="KW-1278">Translocase</keyword>
<keyword id="KW-0812">Transmembrane</keyword>
<keyword id="KW-1133">Transmembrane helix</keyword>
<keyword id="KW-0813">Transport</keyword>
<proteinExistence type="inferred from homology"/>
<comment type="function">
    <text evidence="3">Component of the cytochrome c oxidase, the last enzyme in the mitochondrial electron transport chain which drives oxidative phosphorylation. The respiratory chain contains 3 multisubunit complexes succinate dehydrogenase (complex II, CII), ubiquinol-cytochrome c oxidoreductase (cytochrome b-c1 complex, complex III, CIII) and cytochrome c oxidase (complex IV, CIV), that cooperate to transfer electrons derived from NADH and succinate to molecular oxygen, creating an electrochemical gradient over the inner membrane that drives transmembrane transport and the ATP synthase. Cytochrome c oxidase is the component of the respiratory chain that catalyzes the reduction of oxygen to water. Electrons originating from reduced cytochrome c in the intermembrane space (IMS) are transferred via the dinuclear copper A center (CU(A)) of subunit 2 and heme A of subunit 1 to the active site in subunit 1, a binuclear center (BNC) formed by heme A3 and copper B (CU(B)). The BNC reduces molecular oxygen to 2 water molecules using 4 electrons from cytochrome c in the IMS and 4 protons from the mitochondrial matrix.</text>
</comment>
<comment type="catalytic activity">
    <reaction evidence="3">
        <text>4 Fe(II)-[cytochrome c] + O2 + 8 H(+)(in) = 4 Fe(III)-[cytochrome c] + 2 H2O + 4 H(+)(out)</text>
        <dbReference type="Rhea" id="RHEA:11436"/>
        <dbReference type="Rhea" id="RHEA-COMP:10350"/>
        <dbReference type="Rhea" id="RHEA-COMP:14399"/>
        <dbReference type="ChEBI" id="CHEBI:15377"/>
        <dbReference type="ChEBI" id="CHEBI:15378"/>
        <dbReference type="ChEBI" id="CHEBI:15379"/>
        <dbReference type="ChEBI" id="CHEBI:29033"/>
        <dbReference type="ChEBI" id="CHEBI:29034"/>
        <dbReference type="EC" id="7.1.1.9"/>
    </reaction>
    <physiologicalReaction direction="left-to-right" evidence="3">
        <dbReference type="Rhea" id="RHEA:11437"/>
    </physiologicalReaction>
</comment>
<comment type="cofactor">
    <cofactor evidence="4">
        <name>Cu cation</name>
        <dbReference type="ChEBI" id="CHEBI:23378"/>
    </cofactor>
    <text evidence="4">Binds a dinuclear copper A center per subunit.</text>
</comment>
<comment type="subunit">
    <text evidence="1 4">Component of the cytochrome c oxidase (complex IV, CIV), a multisubunit enzyme composed of 14 subunits. The complex is composed of a catalytic core of 3 subunits MT-CO1, MT-CO2 and MT-CO3, encoded in the mitochondrial DNA, and 11 supernumerary subunits COX4I, COX5A, COX5B, COX6A, COX6B, COX6C, COX7A, COX7B, COX7C, COX8 and NDUFA4, which are encoded in the nuclear genome. The complex exists as a monomer or a dimer and forms supercomplexes (SCs) in the inner mitochondrial membrane with NADH-ubiquinone oxidoreductase (complex I, CI) and ubiquinol-cytochrome c oxidoreductase (cytochrome b-c1 complex, complex III, CIII), resulting in different assemblies (supercomplex SCI(1)III(2)IV(1) and megacomplex MCI(2)III(2)IV(2)) (By similarity). Found in a complex with TMEM177, COA6, COX18, COX20, SCO1 and SCO2. Interacts with TMEM177 in a COX20-dependent manner. Interacts with COX20. Interacts with COX16 (By similarity).</text>
</comment>
<comment type="subcellular location">
    <subcellularLocation>
        <location evidence="4">Mitochondrion inner membrane</location>
        <topology evidence="4">Multi-pass membrane protein</topology>
    </subcellularLocation>
</comment>
<comment type="similarity">
    <text evidence="5">Belongs to the cytochrome c oxidase subunit 2 family.</text>
</comment>
<organism>
    <name type="scientific">Canis lupus familiaris</name>
    <name type="common">Dog</name>
    <name type="synonym">Canis familiaris</name>
    <dbReference type="NCBI Taxonomy" id="9615"/>
    <lineage>
        <taxon>Eukaryota</taxon>
        <taxon>Metazoa</taxon>
        <taxon>Chordata</taxon>
        <taxon>Craniata</taxon>
        <taxon>Vertebrata</taxon>
        <taxon>Euteleostomi</taxon>
        <taxon>Mammalia</taxon>
        <taxon>Eutheria</taxon>
        <taxon>Laurasiatheria</taxon>
        <taxon>Carnivora</taxon>
        <taxon>Caniformia</taxon>
        <taxon>Canidae</taxon>
        <taxon>Canis</taxon>
    </lineage>
</organism>
<dbReference type="EC" id="7.1.1.9"/>
<dbReference type="EMBL" id="U96639">
    <property type="protein sequence ID" value="AAD04766.2"/>
    <property type="molecule type" value="Genomic_DNA"/>
</dbReference>
<dbReference type="EMBL" id="AY729880">
    <property type="protein sequence ID" value="AAU12152.1"/>
    <property type="molecule type" value="Genomic_DNA"/>
</dbReference>
<dbReference type="EMBL" id="AF064588">
    <property type="protein sequence ID" value="AAC18596.1"/>
    <property type="molecule type" value="Genomic_DNA"/>
</dbReference>
<dbReference type="PIR" id="T11496">
    <property type="entry name" value="T11496"/>
</dbReference>
<dbReference type="RefSeq" id="NP_008474.4">
    <property type="nucleotide sequence ID" value="NC_002008.4"/>
</dbReference>
<dbReference type="SMR" id="P67780"/>
<dbReference type="FunCoup" id="P67780">
    <property type="interactions" value="17"/>
</dbReference>
<dbReference type="STRING" id="9615.ENSCAFP00000030312"/>
<dbReference type="PaxDb" id="9612-ENSCAFP00000030312"/>
<dbReference type="GeneID" id="804479"/>
<dbReference type="KEGG" id="cfa:804479"/>
<dbReference type="CTD" id="4513"/>
<dbReference type="eggNOG" id="KOG4767">
    <property type="taxonomic scope" value="Eukaryota"/>
</dbReference>
<dbReference type="HOGENOM" id="CLU_036876_2_3_1"/>
<dbReference type="InParanoid" id="P67780"/>
<dbReference type="OMA" id="WSYEYTD"/>
<dbReference type="TreeFam" id="TF344269"/>
<dbReference type="Proteomes" id="UP000002254">
    <property type="component" value="Mitochondrion"/>
</dbReference>
<dbReference type="Proteomes" id="UP000694429">
    <property type="component" value="Unplaced"/>
</dbReference>
<dbReference type="Proteomes" id="UP000694542">
    <property type="component" value="Unassembled WGS sequence"/>
</dbReference>
<dbReference type="Proteomes" id="UP000805418">
    <property type="component" value="Mitochondrion MT"/>
</dbReference>
<dbReference type="Bgee" id="ENSCAFG00000022726">
    <property type="expression patterns" value="Expressed in hypothalamus and 47 other cell types or tissues"/>
</dbReference>
<dbReference type="GO" id="GO:0005743">
    <property type="term" value="C:mitochondrial inner membrane"/>
    <property type="evidence" value="ECO:0007669"/>
    <property type="project" value="UniProtKB-SubCell"/>
</dbReference>
<dbReference type="GO" id="GO:0045277">
    <property type="term" value="C:respiratory chain complex IV"/>
    <property type="evidence" value="ECO:0000250"/>
    <property type="project" value="UniProtKB"/>
</dbReference>
<dbReference type="GO" id="GO:0005507">
    <property type="term" value="F:copper ion binding"/>
    <property type="evidence" value="ECO:0007669"/>
    <property type="project" value="InterPro"/>
</dbReference>
<dbReference type="GO" id="GO:0004129">
    <property type="term" value="F:cytochrome-c oxidase activity"/>
    <property type="evidence" value="ECO:0007669"/>
    <property type="project" value="UniProtKB-EC"/>
</dbReference>
<dbReference type="GO" id="GO:0042773">
    <property type="term" value="P:ATP synthesis coupled electron transport"/>
    <property type="evidence" value="ECO:0000318"/>
    <property type="project" value="GO_Central"/>
</dbReference>
<dbReference type="CDD" id="cd13912">
    <property type="entry name" value="CcO_II_C"/>
    <property type="match status" value="1"/>
</dbReference>
<dbReference type="FunFam" id="1.10.287.90:FF:000001">
    <property type="entry name" value="Cytochrome c oxidase subunit 2"/>
    <property type="match status" value="1"/>
</dbReference>
<dbReference type="FunFam" id="2.60.40.420:FF:000001">
    <property type="entry name" value="Cytochrome c oxidase subunit 2"/>
    <property type="match status" value="1"/>
</dbReference>
<dbReference type="Gene3D" id="1.10.287.90">
    <property type="match status" value="1"/>
</dbReference>
<dbReference type="Gene3D" id="2.60.40.420">
    <property type="entry name" value="Cupredoxins - blue copper proteins"/>
    <property type="match status" value="1"/>
</dbReference>
<dbReference type="InterPro" id="IPR045187">
    <property type="entry name" value="CcO_II"/>
</dbReference>
<dbReference type="InterPro" id="IPR002429">
    <property type="entry name" value="CcO_II-like_C"/>
</dbReference>
<dbReference type="InterPro" id="IPR034210">
    <property type="entry name" value="CcO_II_C"/>
</dbReference>
<dbReference type="InterPro" id="IPR001505">
    <property type="entry name" value="Copper_CuA"/>
</dbReference>
<dbReference type="InterPro" id="IPR008972">
    <property type="entry name" value="Cupredoxin"/>
</dbReference>
<dbReference type="InterPro" id="IPR014222">
    <property type="entry name" value="Cyt_c_oxidase_su2"/>
</dbReference>
<dbReference type="InterPro" id="IPR011759">
    <property type="entry name" value="Cyt_c_oxidase_su2_TM_dom"/>
</dbReference>
<dbReference type="InterPro" id="IPR036257">
    <property type="entry name" value="Cyt_c_oxidase_su2_TM_sf"/>
</dbReference>
<dbReference type="NCBIfam" id="TIGR02866">
    <property type="entry name" value="CoxB"/>
    <property type="match status" value="1"/>
</dbReference>
<dbReference type="PANTHER" id="PTHR22888:SF9">
    <property type="entry name" value="CYTOCHROME C OXIDASE SUBUNIT 2"/>
    <property type="match status" value="1"/>
</dbReference>
<dbReference type="PANTHER" id="PTHR22888">
    <property type="entry name" value="CYTOCHROME C OXIDASE, SUBUNIT II"/>
    <property type="match status" value="1"/>
</dbReference>
<dbReference type="Pfam" id="PF00116">
    <property type="entry name" value="COX2"/>
    <property type="match status" value="1"/>
</dbReference>
<dbReference type="Pfam" id="PF02790">
    <property type="entry name" value="COX2_TM"/>
    <property type="match status" value="1"/>
</dbReference>
<dbReference type="PRINTS" id="PR01166">
    <property type="entry name" value="CYCOXIDASEII"/>
</dbReference>
<dbReference type="SUPFAM" id="SSF49503">
    <property type="entry name" value="Cupredoxins"/>
    <property type="match status" value="1"/>
</dbReference>
<dbReference type="SUPFAM" id="SSF81464">
    <property type="entry name" value="Cytochrome c oxidase subunit II-like, transmembrane region"/>
    <property type="match status" value="1"/>
</dbReference>
<dbReference type="PROSITE" id="PS00078">
    <property type="entry name" value="COX2"/>
    <property type="match status" value="1"/>
</dbReference>
<dbReference type="PROSITE" id="PS50857">
    <property type="entry name" value="COX2_CUA"/>
    <property type="match status" value="1"/>
</dbReference>
<dbReference type="PROSITE" id="PS50999">
    <property type="entry name" value="COX2_TM"/>
    <property type="match status" value="1"/>
</dbReference>
<name>COX2_CANLF</name>
<sequence length="227" mass="26062">MAYPFQLGLQDATSPIMEELLHFHDHTLMIVFLISSLVLYIISLMLTTKLTHTSTMDAQEVETVWTILPAIILILIALPSLRILYMMDEINNPSLTVKTMGHQWYWSYEYTDYEDLNFDSYMIPTQELKPGELRLLEVDNRVVLPMEMTIRMLISSEDVLHSWAVPSLGLKTDAIPGRLNQTTLMAMRPGLYYGQCSEICGSNHSFMPIVLEMVPLSYFETWSALMV</sequence>